<name>CDA5_ARATH</name>
<keyword id="KW-0378">Hydrolase</keyword>
<keyword id="KW-0479">Metal-binding</keyword>
<keyword id="KW-1185">Reference proteome</keyword>
<keyword id="KW-0862">Zinc</keyword>
<feature type="chain" id="PRO_0000429147" description="Cytidine deaminase 5">
    <location>
        <begin position="1"/>
        <end position="346"/>
    </location>
</feature>
<feature type="domain" description="CMP/dCMP-type deaminase 1" evidence="2">
    <location>
        <begin position="20"/>
        <end position="148"/>
    </location>
</feature>
<feature type="domain" description="CMP/dCMP-type deaminase 2" evidence="2">
    <location>
        <begin position="183"/>
        <end position="304"/>
    </location>
</feature>
<feature type="active site" description="Proton donor" evidence="1">
    <location>
        <position position="73"/>
    </location>
</feature>
<feature type="binding site" evidence="1">
    <location>
        <begin position="58"/>
        <end position="60"/>
    </location>
    <ligand>
        <name>substrate</name>
    </ligand>
</feature>
<feature type="binding site" evidence="1">
    <location>
        <position position="71"/>
    </location>
    <ligand>
        <name>Zn(2+)</name>
        <dbReference type="ChEBI" id="CHEBI:29105"/>
        <note>catalytic</note>
    </ligand>
</feature>
<feature type="binding site" evidence="1">
    <location>
        <position position="104"/>
    </location>
    <ligand>
        <name>Zn(2+)</name>
        <dbReference type="ChEBI" id="CHEBI:29105"/>
        <note>catalytic</note>
    </ligand>
</feature>
<feature type="binding site" evidence="1">
    <location>
        <position position="107"/>
    </location>
    <ligand>
        <name>Zn(2+)</name>
        <dbReference type="ChEBI" id="CHEBI:29105"/>
        <note>catalytic</note>
    </ligand>
</feature>
<feature type="sequence conflict" description="In Ref. 2; AAC69569." evidence="3" ref="2">
    <original>D</original>
    <variation>H</variation>
    <location>
        <position position="95"/>
    </location>
</feature>
<feature type="sequence conflict" description="In Ref. 2; AAC69569." evidence="3" ref="2">
    <original>R</original>
    <variation>H</variation>
    <location>
        <position position="109"/>
    </location>
</feature>
<feature type="sequence conflict" description="In Ref. 2; AAC69569." evidence="3" ref="2">
    <original>K</original>
    <variation>R</variation>
    <location>
        <position position="345"/>
    </location>
</feature>
<protein>
    <recommendedName>
        <fullName>Cytidine deaminase 5</fullName>
        <ecNumber>3.5.4.5</ecNumber>
    </recommendedName>
</protein>
<comment type="function">
    <text evidence="1">This enzyme scavenges exogenous and endogenous cytidine and 2'-deoxycytidine for UMP synthesis.</text>
</comment>
<comment type="catalytic activity">
    <reaction>
        <text>cytidine + H2O + H(+) = uridine + NH4(+)</text>
        <dbReference type="Rhea" id="RHEA:16069"/>
        <dbReference type="ChEBI" id="CHEBI:15377"/>
        <dbReference type="ChEBI" id="CHEBI:15378"/>
        <dbReference type="ChEBI" id="CHEBI:16704"/>
        <dbReference type="ChEBI" id="CHEBI:17562"/>
        <dbReference type="ChEBI" id="CHEBI:28938"/>
        <dbReference type="EC" id="3.5.4.5"/>
    </reaction>
</comment>
<comment type="catalytic activity">
    <reaction>
        <text>2'-deoxycytidine + H2O + H(+) = 2'-deoxyuridine + NH4(+)</text>
        <dbReference type="Rhea" id="RHEA:13433"/>
        <dbReference type="ChEBI" id="CHEBI:15377"/>
        <dbReference type="ChEBI" id="CHEBI:15378"/>
        <dbReference type="ChEBI" id="CHEBI:15698"/>
        <dbReference type="ChEBI" id="CHEBI:16450"/>
        <dbReference type="ChEBI" id="CHEBI:28938"/>
        <dbReference type="EC" id="3.5.4.5"/>
    </reaction>
</comment>
<comment type="cofactor">
    <cofactor evidence="1">
        <name>Zn(2+)</name>
        <dbReference type="ChEBI" id="CHEBI:29105"/>
    </cofactor>
    <text evidence="1">Binds 1 zinc ion per subunit.</text>
</comment>
<comment type="subunit">
    <text evidence="1">Homodimer.</text>
</comment>
<comment type="similarity">
    <text evidence="3">Belongs to the cytidine and deoxycytidylate deaminase family.</text>
</comment>
<comment type="sequence caution" evidence="3">
    <conflict type="erroneous gene model prediction">
        <sequence resource="EMBL-CDS" id="AAC69569"/>
    </conflict>
</comment>
<dbReference type="EC" id="3.5.4.5"/>
<dbReference type="EMBL" id="AF121877">
    <property type="protein sequence ID" value="AAD30447.1"/>
    <property type="molecule type" value="Genomic_DNA"/>
</dbReference>
<dbReference type="EMBL" id="AF080676">
    <property type="protein sequence ID" value="AAC69569.1"/>
    <property type="status" value="ALT_SEQ"/>
    <property type="molecule type" value="Genomic_DNA"/>
</dbReference>
<dbReference type="EMBL" id="AL079344">
    <property type="protein sequence ID" value="CAB45324.1"/>
    <property type="molecule type" value="Genomic_DNA"/>
</dbReference>
<dbReference type="EMBL" id="AL161575">
    <property type="protein sequence ID" value="CAB79722.1"/>
    <property type="molecule type" value="Genomic_DNA"/>
</dbReference>
<dbReference type="EMBL" id="CP002687">
    <property type="protein sequence ID" value="AEE85654.1"/>
    <property type="molecule type" value="Genomic_DNA"/>
</dbReference>
<dbReference type="PIR" id="T09927">
    <property type="entry name" value="T09927"/>
</dbReference>
<dbReference type="RefSeq" id="NP_194693.1">
    <property type="nucleotide sequence ID" value="NM_119109.2"/>
</dbReference>
<dbReference type="SMR" id="Q9S7L8"/>
<dbReference type="FunCoup" id="Q9S7L8">
    <property type="interactions" value="126"/>
</dbReference>
<dbReference type="STRING" id="3702.Q9S7L8"/>
<dbReference type="PaxDb" id="3702-AT4G29640.1"/>
<dbReference type="EnsemblPlants" id="AT4G29640.1">
    <property type="protein sequence ID" value="AT4G29640.1"/>
    <property type="gene ID" value="AT4G29640"/>
</dbReference>
<dbReference type="GeneID" id="829085"/>
<dbReference type="Gramene" id="AT4G29640.1">
    <property type="protein sequence ID" value="AT4G29640.1"/>
    <property type="gene ID" value="AT4G29640"/>
</dbReference>
<dbReference type="KEGG" id="ath:AT4G29640"/>
<dbReference type="Araport" id="AT4G29640"/>
<dbReference type="TAIR" id="AT4G29640"/>
<dbReference type="eggNOG" id="KOG0833">
    <property type="taxonomic scope" value="Eukaryota"/>
</dbReference>
<dbReference type="HOGENOM" id="CLU_052424_1_0_1"/>
<dbReference type="InParanoid" id="Q9S7L8"/>
<dbReference type="OMA" id="SLESHMP"/>
<dbReference type="PhylomeDB" id="Q9S7L8"/>
<dbReference type="BioCyc" id="ARA:AT4G29640-MONOMER"/>
<dbReference type="PRO" id="PR:Q9S7L8"/>
<dbReference type="Proteomes" id="UP000006548">
    <property type="component" value="Chromosome 4"/>
</dbReference>
<dbReference type="ExpressionAtlas" id="Q9S7L8">
    <property type="expression patterns" value="baseline and differential"/>
</dbReference>
<dbReference type="GO" id="GO:0005737">
    <property type="term" value="C:cytoplasm"/>
    <property type="evidence" value="ECO:0007669"/>
    <property type="project" value="UniProtKB-ARBA"/>
</dbReference>
<dbReference type="GO" id="GO:0004126">
    <property type="term" value="F:cytidine deaminase activity"/>
    <property type="evidence" value="ECO:0007669"/>
    <property type="project" value="UniProtKB-EC"/>
</dbReference>
<dbReference type="GO" id="GO:0042802">
    <property type="term" value="F:identical protein binding"/>
    <property type="evidence" value="ECO:0007669"/>
    <property type="project" value="UniProtKB-ARBA"/>
</dbReference>
<dbReference type="GO" id="GO:0008270">
    <property type="term" value="F:zinc ion binding"/>
    <property type="evidence" value="ECO:0007669"/>
    <property type="project" value="InterPro"/>
</dbReference>
<dbReference type="GO" id="GO:0009972">
    <property type="term" value="P:cytidine deamination"/>
    <property type="evidence" value="ECO:0007669"/>
    <property type="project" value="InterPro"/>
</dbReference>
<dbReference type="CDD" id="cd01283">
    <property type="entry name" value="cytidine_deaminase"/>
    <property type="match status" value="1"/>
</dbReference>
<dbReference type="FunFam" id="3.40.140.10:FF:000006">
    <property type="entry name" value="Cytidine deaminase"/>
    <property type="match status" value="1"/>
</dbReference>
<dbReference type="Gene3D" id="3.40.140.10">
    <property type="entry name" value="Cytidine Deaminase, domain 2"/>
    <property type="match status" value="2"/>
</dbReference>
<dbReference type="InterPro" id="IPR016192">
    <property type="entry name" value="APOBEC/CMP_deaminase_Zn-bd"/>
</dbReference>
<dbReference type="InterPro" id="IPR002125">
    <property type="entry name" value="CMP_dCMP_dom"/>
</dbReference>
<dbReference type="InterPro" id="IPR013171">
    <property type="entry name" value="Cyd/dCyd_deaminase_Zn-bd"/>
</dbReference>
<dbReference type="InterPro" id="IPR050202">
    <property type="entry name" value="Cyt/Deoxycyt_deaminase"/>
</dbReference>
<dbReference type="InterPro" id="IPR006263">
    <property type="entry name" value="Cyt_deam_dimer"/>
</dbReference>
<dbReference type="InterPro" id="IPR016193">
    <property type="entry name" value="Cytidine_deaminase-like"/>
</dbReference>
<dbReference type="NCBIfam" id="TIGR01355">
    <property type="entry name" value="cyt_deam_dimer"/>
    <property type="match status" value="1"/>
</dbReference>
<dbReference type="PANTHER" id="PTHR11644">
    <property type="entry name" value="CYTIDINE DEAMINASE"/>
    <property type="match status" value="1"/>
</dbReference>
<dbReference type="PANTHER" id="PTHR11644:SF2">
    <property type="entry name" value="CYTIDINE DEAMINASE"/>
    <property type="match status" value="1"/>
</dbReference>
<dbReference type="Pfam" id="PF08211">
    <property type="entry name" value="dCMP_cyt_deam_2"/>
    <property type="match status" value="1"/>
</dbReference>
<dbReference type="PIRSF" id="PIRSF006334">
    <property type="entry name" value="Cdd_plus_pseudo"/>
    <property type="match status" value="1"/>
</dbReference>
<dbReference type="SUPFAM" id="SSF53927">
    <property type="entry name" value="Cytidine deaminase-like"/>
    <property type="match status" value="2"/>
</dbReference>
<dbReference type="PROSITE" id="PS00903">
    <property type="entry name" value="CYT_DCMP_DEAMINASES_1"/>
    <property type="match status" value="1"/>
</dbReference>
<dbReference type="PROSITE" id="PS51747">
    <property type="entry name" value="CYT_DCMP_DEAMINASES_2"/>
    <property type="match status" value="2"/>
</dbReference>
<reference key="1">
    <citation type="submission" date="1999-01" db="EMBL/GenBank/DDBJ databases">
        <title>Cytidine deaminases in Arabidopsis thaliana: a gene family of eight members are located within a 24 kb region.</title>
        <authorList>
            <person name="Sanchez H."/>
            <person name="Schuster W."/>
        </authorList>
    </citation>
    <scope>NUCLEOTIDE SEQUENCE [GENOMIC DNA]</scope>
    <source>
        <strain>cv. Columbia</strain>
    </source>
</reference>
<reference key="2">
    <citation type="submission" date="1999-06" db="EMBL/GenBank/DDBJ databases">
        <title>Cloning and characterisation of a cytidine deaminase gene family from Arabidopsis thaliana.</title>
        <authorList>
            <person name="Faivre-Nitschke S.E."/>
            <person name="Grienenberger J.M."/>
            <person name="Gualberto J.M."/>
        </authorList>
    </citation>
    <scope>NUCLEOTIDE SEQUENCE [GENOMIC DNA]</scope>
    <source>
        <strain>cv. Landsberg erecta</strain>
    </source>
</reference>
<reference key="3">
    <citation type="journal article" date="1999" name="Nature">
        <title>Sequence and analysis of chromosome 4 of the plant Arabidopsis thaliana.</title>
        <authorList>
            <person name="Mayer K.F.X."/>
            <person name="Schueller C."/>
            <person name="Wambutt R."/>
            <person name="Murphy G."/>
            <person name="Volckaert G."/>
            <person name="Pohl T."/>
            <person name="Duesterhoeft A."/>
            <person name="Stiekema W."/>
            <person name="Entian K.-D."/>
            <person name="Terryn N."/>
            <person name="Harris B."/>
            <person name="Ansorge W."/>
            <person name="Brandt P."/>
            <person name="Grivell L.A."/>
            <person name="Rieger M."/>
            <person name="Weichselgartner M."/>
            <person name="de Simone V."/>
            <person name="Obermaier B."/>
            <person name="Mache R."/>
            <person name="Mueller M."/>
            <person name="Kreis M."/>
            <person name="Delseny M."/>
            <person name="Puigdomenech P."/>
            <person name="Watson M."/>
            <person name="Schmidtheini T."/>
            <person name="Reichert B."/>
            <person name="Portetelle D."/>
            <person name="Perez-Alonso M."/>
            <person name="Boutry M."/>
            <person name="Bancroft I."/>
            <person name="Vos P."/>
            <person name="Hoheisel J."/>
            <person name="Zimmermann W."/>
            <person name="Wedler H."/>
            <person name="Ridley P."/>
            <person name="Langham S.-A."/>
            <person name="McCullagh B."/>
            <person name="Bilham L."/>
            <person name="Robben J."/>
            <person name="van der Schueren J."/>
            <person name="Grymonprez B."/>
            <person name="Chuang Y.-J."/>
            <person name="Vandenbussche F."/>
            <person name="Braeken M."/>
            <person name="Weltjens I."/>
            <person name="Voet M."/>
            <person name="Bastiaens I."/>
            <person name="Aert R."/>
            <person name="Defoor E."/>
            <person name="Weitzenegger T."/>
            <person name="Bothe G."/>
            <person name="Ramsperger U."/>
            <person name="Hilbert H."/>
            <person name="Braun M."/>
            <person name="Holzer E."/>
            <person name="Brandt A."/>
            <person name="Peters S."/>
            <person name="van Staveren M."/>
            <person name="Dirkse W."/>
            <person name="Mooijman P."/>
            <person name="Klein Lankhorst R."/>
            <person name="Rose M."/>
            <person name="Hauf J."/>
            <person name="Koetter P."/>
            <person name="Berneiser S."/>
            <person name="Hempel S."/>
            <person name="Feldpausch M."/>
            <person name="Lamberth S."/>
            <person name="Van den Daele H."/>
            <person name="De Keyser A."/>
            <person name="Buysshaert C."/>
            <person name="Gielen J."/>
            <person name="Villarroel R."/>
            <person name="De Clercq R."/>
            <person name="van Montagu M."/>
            <person name="Rogers J."/>
            <person name="Cronin A."/>
            <person name="Quail M.A."/>
            <person name="Bray-Allen S."/>
            <person name="Clark L."/>
            <person name="Doggett J."/>
            <person name="Hall S."/>
            <person name="Kay M."/>
            <person name="Lennard N."/>
            <person name="McLay K."/>
            <person name="Mayes R."/>
            <person name="Pettett A."/>
            <person name="Rajandream M.A."/>
            <person name="Lyne M."/>
            <person name="Benes V."/>
            <person name="Rechmann S."/>
            <person name="Borkova D."/>
            <person name="Bloecker H."/>
            <person name="Scharfe M."/>
            <person name="Grimm M."/>
            <person name="Loehnert T.-H."/>
            <person name="Dose S."/>
            <person name="de Haan M."/>
            <person name="Maarse A.C."/>
            <person name="Schaefer M."/>
            <person name="Mueller-Auer S."/>
            <person name="Gabel C."/>
            <person name="Fuchs M."/>
            <person name="Fartmann B."/>
            <person name="Granderath K."/>
            <person name="Dauner D."/>
            <person name="Herzl A."/>
            <person name="Neumann S."/>
            <person name="Argiriou A."/>
            <person name="Vitale D."/>
            <person name="Liguori R."/>
            <person name="Piravandi E."/>
            <person name="Massenet O."/>
            <person name="Quigley F."/>
            <person name="Clabauld G."/>
            <person name="Muendlein A."/>
            <person name="Felber R."/>
            <person name="Schnabl S."/>
            <person name="Hiller R."/>
            <person name="Schmidt W."/>
            <person name="Lecharny A."/>
            <person name="Aubourg S."/>
            <person name="Chefdor F."/>
            <person name="Cooke R."/>
            <person name="Berger C."/>
            <person name="Monfort A."/>
            <person name="Casacuberta E."/>
            <person name="Gibbons T."/>
            <person name="Weber N."/>
            <person name="Vandenbol M."/>
            <person name="Bargues M."/>
            <person name="Terol J."/>
            <person name="Torres A."/>
            <person name="Perez-Perez A."/>
            <person name="Purnelle B."/>
            <person name="Bent E."/>
            <person name="Johnson S."/>
            <person name="Tacon D."/>
            <person name="Jesse T."/>
            <person name="Heijnen L."/>
            <person name="Schwarz S."/>
            <person name="Scholler P."/>
            <person name="Heber S."/>
            <person name="Francs P."/>
            <person name="Bielke C."/>
            <person name="Frishman D."/>
            <person name="Haase D."/>
            <person name="Lemcke K."/>
            <person name="Mewes H.-W."/>
            <person name="Stocker S."/>
            <person name="Zaccaria P."/>
            <person name="Bevan M."/>
            <person name="Wilson R.K."/>
            <person name="de la Bastide M."/>
            <person name="Habermann K."/>
            <person name="Parnell L."/>
            <person name="Dedhia N."/>
            <person name="Gnoj L."/>
            <person name="Schutz K."/>
            <person name="Huang E."/>
            <person name="Spiegel L."/>
            <person name="Sekhon M."/>
            <person name="Murray J."/>
            <person name="Sheet P."/>
            <person name="Cordes M."/>
            <person name="Abu-Threideh J."/>
            <person name="Stoneking T."/>
            <person name="Kalicki J."/>
            <person name="Graves T."/>
            <person name="Harmon G."/>
            <person name="Edwards J."/>
            <person name="Latreille P."/>
            <person name="Courtney L."/>
            <person name="Cloud J."/>
            <person name="Abbott A."/>
            <person name="Scott K."/>
            <person name="Johnson D."/>
            <person name="Minx P."/>
            <person name="Bentley D."/>
            <person name="Fulton B."/>
            <person name="Miller N."/>
            <person name="Greco T."/>
            <person name="Kemp K."/>
            <person name="Kramer J."/>
            <person name="Fulton L."/>
            <person name="Mardis E."/>
            <person name="Dante M."/>
            <person name="Pepin K."/>
            <person name="Hillier L.W."/>
            <person name="Nelson J."/>
            <person name="Spieth J."/>
            <person name="Ryan E."/>
            <person name="Andrews S."/>
            <person name="Geisel C."/>
            <person name="Layman D."/>
            <person name="Du H."/>
            <person name="Ali J."/>
            <person name="Berghoff A."/>
            <person name="Jones K."/>
            <person name="Drone K."/>
            <person name="Cotton M."/>
            <person name="Joshu C."/>
            <person name="Antonoiu B."/>
            <person name="Zidanic M."/>
            <person name="Strong C."/>
            <person name="Sun H."/>
            <person name="Lamar B."/>
            <person name="Yordan C."/>
            <person name="Ma P."/>
            <person name="Zhong J."/>
            <person name="Preston R."/>
            <person name="Vil D."/>
            <person name="Shekher M."/>
            <person name="Matero A."/>
            <person name="Shah R."/>
            <person name="Swaby I.K."/>
            <person name="O'Shaughnessy A."/>
            <person name="Rodriguez M."/>
            <person name="Hoffman J."/>
            <person name="Till S."/>
            <person name="Granat S."/>
            <person name="Shohdy N."/>
            <person name="Hasegawa A."/>
            <person name="Hameed A."/>
            <person name="Lodhi M."/>
            <person name="Johnson A."/>
            <person name="Chen E."/>
            <person name="Marra M.A."/>
            <person name="Martienssen R."/>
            <person name="McCombie W.R."/>
        </authorList>
    </citation>
    <scope>NUCLEOTIDE SEQUENCE [LARGE SCALE GENOMIC DNA]</scope>
    <source>
        <strain>cv. Columbia</strain>
    </source>
</reference>
<reference key="4">
    <citation type="journal article" date="2017" name="Plant J.">
        <title>Araport11: a complete reannotation of the Arabidopsis thaliana reference genome.</title>
        <authorList>
            <person name="Cheng C.Y."/>
            <person name="Krishnakumar V."/>
            <person name="Chan A.P."/>
            <person name="Thibaud-Nissen F."/>
            <person name="Schobel S."/>
            <person name="Town C.D."/>
        </authorList>
    </citation>
    <scope>GENOME REANNOTATION</scope>
    <source>
        <strain>cv. Columbia</strain>
    </source>
</reference>
<accession>Q9S7L8</accession>
<accession>Q9ZT32</accession>
<proteinExistence type="inferred from homology"/>
<gene>
    <name type="primary">CDA5</name>
    <name type="synonym">DESG</name>
    <name type="ordered locus">At4g29640</name>
    <name type="ORF">T16L4.150</name>
</gene>
<sequence length="346" mass="38081">MAQQYKFVFTAEQAASEGVTDHKKLPKLIRKARNLVKAPSKVGAVGRASSGRFYLGVNVEFKGLLPHFSIHAEQFLIANLALNSEPKLTHLAVSDNGTVFQDPCYDCTRFLKEINNAHQIEILIKNAHGRDGSFKSLESHMPDEFGSESILSAEPSLLLMERDNCLALIDEDSAAGGISSNADLCSFLKLEALKAANKSYAPYRKCPSGVALFCEGEVYAGWYIETVDRTISLGPVQAALVDFIARGEGKGFDKITGAVLVEKKDAKVGQEDTARKLLEKIAAPNCDFKVFHCQEERKDWITGAVLVEKKDAKEGQEGKLLEKIAAPNCDFKVSHCDEELKDWIKL</sequence>
<organism>
    <name type="scientific">Arabidopsis thaliana</name>
    <name type="common">Mouse-ear cress</name>
    <dbReference type="NCBI Taxonomy" id="3702"/>
    <lineage>
        <taxon>Eukaryota</taxon>
        <taxon>Viridiplantae</taxon>
        <taxon>Streptophyta</taxon>
        <taxon>Embryophyta</taxon>
        <taxon>Tracheophyta</taxon>
        <taxon>Spermatophyta</taxon>
        <taxon>Magnoliopsida</taxon>
        <taxon>eudicotyledons</taxon>
        <taxon>Gunneridae</taxon>
        <taxon>Pentapetalae</taxon>
        <taxon>rosids</taxon>
        <taxon>malvids</taxon>
        <taxon>Brassicales</taxon>
        <taxon>Brassicaceae</taxon>
        <taxon>Camelineae</taxon>
        <taxon>Arabidopsis</taxon>
    </lineage>
</organism>
<evidence type="ECO:0000250" key="1"/>
<evidence type="ECO:0000255" key="2">
    <source>
        <dbReference type="PROSITE-ProRule" id="PRU01083"/>
    </source>
</evidence>
<evidence type="ECO:0000305" key="3"/>